<dbReference type="EC" id="3.6.4.-" evidence="1"/>
<dbReference type="EMBL" id="BA000037">
    <property type="protein sequence ID" value="BAC95048.1"/>
    <property type="molecule type" value="Genomic_DNA"/>
</dbReference>
<dbReference type="RefSeq" id="WP_011150787.1">
    <property type="nucleotide sequence ID" value="NC_005139.1"/>
</dbReference>
<dbReference type="SMR" id="Q7MJ78"/>
<dbReference type="STRING" id="672.VV93_v1c19940"/>
<dbReference type="GeneID" id="93896350"/>
<dbReference type="KEGG" id="vvy:VV2284"/>
<dbReference type="eggNOG" id="COG2255">
    <property type="taxonomic scope" value="Bacteria"/>
</dbReference>
<dbReference type="HOGENOM" id="CLU_055599_1_0_6"/>
<dbReference type="Proteomes" id="UP000002675">
    <property type="component" value="Chromosome I"/>
</dbReference>
<dbReference type="GO" id="GO:0005737">
    <property type="term" value="C:cytoplasm"/>
    <property type="evidence" value="ECO:0007669"/>
    <property type="project" value="UniProtKB-SubCell"/>
</dbReference>
<dbReference type="GO" id="GO:0048476">
    <property type="term" value="C:Holliday junction resolvase complex"/>
    <property type="evidence" value="ECO:0007669"/>
    <property type="project" value="UniProtKB-UniRule"/>
</dbReference>
<dbReference type="GO" id="GO:0005524">
    <property type="term" value="F:ATP binding"/>
    <property type="evidence" value="ECO:0007669"/>
    <property type="project" value="UniProtKB-UniRule"/>
</dbReference>
<dbReference type="GO" id="GO:0016887">
    <property type="term" value="F:ATP hydrolysis activity"/>
    <property type="evidence" value="ECO:0007669"/>
    <property type="project" value="InterPro"/>
</dbReference>
<dbReference type="GO" id="GO:0000400">
    <property type="term" value="F:four-way junction DNA binding"/>
    <property type="evidence" value="ECO:0007669"/>
    <property type="project" value="UniProtKB-UniRule"/>
</dbReference>
<dbReference type="GO" id="GO:0009378">
    <property type="term" value="F:four-way junction helicase activity"/>
    <property type="evidence" value="ECO:0007669"/>
    <property type="project" value="InterPro"/>
</dbReference>
<dbReference type="GO" id="GO:0006310">
    <property type="term" value="P:DNA recombination"/>
    <property type="evidence" value="ECO:0007669"/>
    <property type="project" value="UniProtKB-UniRule"/>
</dbReference>
<dbReference type="GO" id="GO:0006281">
    <property type="term" value="P:DNA repair"/>
    <property type="evidence" value="ECO:0007669"/>
    <property type="project" value="UniProtKB-UniRule"/>
</dbReference>
<dbReference type="CDD" id="cd00009">
    <property type="entry name" value="AAA"/>
    <property type="match status" value="1"/>
</dbReference>
<dbReference type="FunFam" id="1.10.10.10:FF:000086">
    <property type="entry name" value="Holliday junction ATP-dependent DNA helicase RuvB"/>
    <property type="match status" value="1"/>
</dbReference>
<dbReference type="FunFam" id="1.10.8.60:FF:000023">
    <property type="entry name" value="Holliday junction ATP-dependent DNA helicase RuvB"/>
    <property type="match status" value="1"/>
</dbReference>
<dbReference type="FunFam" id="3.40.50.300:FF:000073">
    <property type="entry name" value="Holliday junction ATP-dependent DNA helicase RuvB"/>
    <property type="match status" value="1"/>
</dbReference>
<dbReference type="Gene3D" id="1.10.8.60">
    <property type="match status" value="1"/>
</dbReference>
<dbReference type="Gene3D" id="3.40.50.300">
    <property type="entry name" value="P-loop containing nucleotide triphosphate hydrolases"/>
    <property type="match status" value="1"/>
</dbReference>
<dbReference type="Gene3D" id="1.10.10.10">
    <property type="entry name" value="Winged helix-like DNA-binding domain superfamily/Winged helix DNA-binding domain"/>
    <property type="match status" value="1"/>
</dbReference>
<dbReference type="HAMAP" id="MF_00016">
    <property type="entry name" value="DNA_HJ_migration_RuvB"/>
    <property type="match status" value="1"/>
</dbReference>
<dbReference type="InterPro" id="IPR003593">
    <property type="entry name" value="AAA+_ATPase"/>
</dbReference>
<dbReference type="InterPro" id="IPR041445">
    <property type="entry name" value="AAA_lid_4"/>
</dbReference>
<dbReference type="InterPro" id="IPR004605">
    <property type="entry name" value="DNA_helicase_Holl-junc_RuvB"/>
</dbReference>
<dbReference type="InterPro" id="IPR027417">
    <property type="entry name" value="P-loop_NTPase"/>
</dbReference>
<dbReference type="InterPro" id="IPR008824">
    <property type="entry name" value="RuvB-like_N"/>
</dbReference>
<dbReference type="InterPro" id="IPR008823">
    <property type="entry name" value="RuvB_C"/>
</dbReference>
<dbReference type="InterPro" id="IPR036388">
    <property type="entry name" value="WH-like_DNA-bd_sf"/>
</dbReference>
<dbReference type="InterPro" id="IPR036390">
    <property type="entry name" value="WH_DNA-bd_sf"/>
</dbReference>
<dbReference type="NCBIfam" id="NF000868">
    <property type="entry name" value="PRK00080.1"/>
    <property type="match status" value="1"/>
</dbReference>
<dbReference type="NCBIfam" id="TIGR00635">
    <property type="entry name" value="ruvB"/>
    <property type="match status" value="1"/>
</dbReference>
<dbReference type="PANTHER" id="PTHR42848">
    <property type="match status" value="1"/>
</dbReference>
<dbReference type="PANTHER" id="PTHR42848:SF1">
    <property type="entry name" value="HOLLIDAY JUNCTION BRANCH MIGRATION COMPLEX SUBUNIT RUVB"/>
    <property type="match status" value="1"/>
</dbReference>
<dbReference type="Pfam" id="PF17864">
    <property type="entry name" value="AAA_lid_4"/>
    <property type="match status" value="1"/>
</dbReference>
<dbReference type="Pfam" id="PF05491">
    <property type="entry name" value="RuvB_C"/>
    <property type="match status" value="1"/>
</dbReference>
<dbReference type="Pfam" id="PF05496">
    <property type="entry name" value="RuvB_N"/>
    <property type="match status" value="1"/>
</dbReference>
<dbReference type="SMART" id="SM00382">
    <property type="entry name" value="AAA"/>
    <property type="match status" value="1"/>
</dbReference>
<dbReference type="SUPFAM" id="SSF52540">
    <property type="entry name" value="P-loop containing nucleoside triphosphate hydrolases"/>
    <property type="match status" value="1"/>
</dbReference>
<dbReference type="SUPFAM" id="SSF46785">
    <property type="entry name" value="Winged helix' DNA-binding domain"/>
    <property type="match status" value="1"/>
</dbReference>
<feature type="chain" id="PRO_0000165630" description="Holliday junction branch migration complex subunit RuvB">
    <location>
        <begin position="1"/>
        <end position="334"/>
    </location>
</feature>
<feature type="region of interest" description="Large ATPase domain (RuvB-L)" evidence="1">
    <location>
        <begin position="4"/>
        <end position="186"/>
    </location>
</feature>
<feature type="region of interest" description="Small ATPAse domain (RuvB-S)" evidence="1">
    <location>
        <begin position="187"/>
        <end position="257"/>
    </location>
</feature>
<feature type="region of interest" description="Head domain (RuvB-H)" evidence="1">
    <location>
        <begin position="260"/>
        <end position="334"/>
    </location>
</feature>
<feature type="binding site" evidence="1">
    <location>
        <position position="25"/>
    </location>
    <ligand>
        <name>ATP</name>
        <dbReference type="ChEBI" id="CHEBI:30616"/>
    </ligand>
</feature>
<feature type="binding site" evidence="1">
    <location>
        <position position="26"/>
    </location>
    <ligand>
        <name>ATP</name>
        <dbReference type="ChEBI" id="CHEBI:30616"/>
    </ligand>
</feature>
<feature type="binding site" evidence="1">
    <location>
        <position position="67"/>
    </location>
    <ligand>
        <name>ATP</name>
        <dbReference type="ChEBI" id="CHEBI:30616"/>
    </ligand>
</feature>
<feature type="binding site" evidence="1">
    <location>
        <position position="70"/>
    </location>
    <ligand>
        <name>ATP</name>
        <dbReference type="ChEBI" id="CHEBI:30616"/>
    </ligand>
</feature>
<feature type="binding site" evidence="1">
    <location>
        <position position="71"/>
    </location>
    <ligand>
        <name>ATP</name>
        <dbReference type="ChEBI" id="CHEBI:30616"/>
    </ligand>
</feature>
<feature type="binding site" evidence="1">
    <location>
        <position position="71"/>
    </location>
    <ligand>
        <name>Mg(2+)</name>
        <dbReference type="ChEBI" id="CHEBI:18420"/>
    </ligand>
</feature>
<feature type="binding site" evidence="1">
    <location>
        <position position="72"/>
    </location>
    <ligand>
        <name>ATP</name>
        <dbReference type="ChEBI" id="CHEBI:30616"/>
    </ligand>
</feature>
<feature type="binding site" evidence="1">
    <location>
        <begin position="133"/>
        <end position="135"/>
    </location>
    <ligand>
        <name>ATP</name>
        <dbReference type="ChEBI" id="CHEBI:30616"/>
    </ligand>
</feature>
<feature type="binding site" evidence="1">
    <location>
        <position position="176"/>
    </location>
    <ligand>
        <name>ATP</name>
        <dbReference type="ChEBI" id="CHEBI:30616"/>
    </ligand>
</feature>
<feature type="binding site" evidence="1">
    <location>
        <position position="186"/>
    </location>
    <ligand>
        <name>ATP</name>
        <dbReference type="ChEBI" id="CHEBI:30616"/>
    </ligand>
</feature>
<feature type="binding site" evidence="1">
    <location>
        <position position="223"/>
    </location>
    <ligand>
        <name>ATP</name>
        <dbReference type="ChEBI" id="CHEBI:30616"/>
    </ligand>
</feature>
<feature type="binding site" evidence="1">
    <location>
        <position position="315"/>
    </location>
    <ligand>
        <name>DNA</name>
        <dbReference type="ChEBI" id="CHEBI:16991"/>
    </ligand>
</feature>
<feature type="binding site" evidence="1">
    <location>
        <position position="320"/>
    </location>
    <ligand>
        <name>DNA</name>
        <dbReference type="ChEBI" id="CHEBI:16991"/>
    </ligand>
</feature>
<keyword id="KW-0067">ATP-binding</keyword>
<keyword id="KW-0963">Cytoplasm</keyword>
<keyword id="KW-0227">DNA damage</keyword>
<keyword id="KW-0233">DNA recombination</keyword>
<keyword id="KW-0234">DNA repair</keyword>
<keyword id="KW-0238">DNA-binding</keyword>
<keyword id="KW-0378">Hydrolase</keyword>
<keyword id="KW-0547">Nucleotide-binding</keyword>
<evidence type="ECO:0000255" key="1">
    <source>
        <dbReference type="HAMAP-Rule" id="MF_00016"/>
    </source>
</evidence>
<accession>Q7MJ78</accession>
<proteinExistence type="inferred from homology"/>
<name>RUVB_VIBVY</name>
<reference key="1">
    <citation type="journal article" date="2003" name="Genome Res.">
        <title>Comparative genome analysis of Vibrio vulnificus, a marine pathogen.</title>
        <authorList>
            <person name="Chen C.-Y."/>
            <person name="Wu K.-M."/>
            <person name="Chang Y.-C."/>
            <person name="Chang C.-H."/>
            <person name="Tsai H.-C."/>
            <person name="Liao T.-L."/>
            <person name="Liu Y.-M."/>
            <person name="Chen H.-J."/>
            <person name="Shen A.B.-T."/>
            <person name="Li J.-C."/>
            <person name="Su T.-L."/>
            <person name="Shao C.-P."/>
            <person name="Lee C.-T."/>
            <person name="Hor L.-I."/>
            <person name="Tsai S.-F."/>
        </authorList>
    </citation>
    <scope>NUCLEOTIDE SEQUENCE [LARGE SCALE GENOMIC DNA]</scope>
    <source>
        <strain>YJ016</strain>
    </source>
</reference>
<comment type="function">
    <text evidence="1">The RuvA-RuvB-RuvC complex processes Holliday junction (HJ) DNA during genetic recombination and DNA repair, while the RuvA-RuvB complex plays an important role in the rescue of blocked DNA replication forks via replication fork reversal (RFR). RuvA specifically binds to HJ cruciform DNA, conferring on it an open structure. The RuvB hexamer acts as an ATP-dependent pump, pulling dsDNA into and through the RuvAB complex. RuvB forms 2 homohexamers on either side of HJ DNA bound by 1 or 2 RuvA tetramers; 4 subunits per hexamer contact DNA at a time. Coordinated motions by a converter formed by DNA-disengaged RuvB subunits stimulates ATP hydrolysis and nucleotide exchange. Immobilization of the converter enables RuvB to convert the ATP-contained energy into a lever motion, pulling 2 nucleotides of DNA out of the RuvA tetramer per ATP hydrolyzed, thus driving DNA branch migration. The RuvB motors rotate together with the DNA substrate, which together with the progressing nucleotide cycle form the mechanistic basis for DNA recombination by continuous HJ branch migration. Branch migration allows RuvC to scan DNA until it finds its consensus sequence, where it cleaves and resolves cruciform DNA.</text>
</comment>
<comment type="catalytic activity">
    <reaction evidence="1">
        <text>ATP + H2O = ADP + phosphate + H(+)</text>
        <dbReference type="Rhea" id="RHEA:13065"/>
        <dbReference type="ChEBI" id="CHEBI:15377"/>
        <dbReference type="ChEBI" id="CHEBI:15378"/>
        <dbReference type="ChEBI" id="CHEBI:30616"/>
        <dbReference type="ChEBI" id="CHEBI:43474"/>
        <dbReference type="ChEBI" id="CHEBI:456216"/>
    </reaction>
</comment>
<comment type="subunit">
    <text evidence="1">Homohexamer. Forms an RuvA(8)-RuvB(12)-Holliday junction (HJ) complex. HJ DNA is sandwiched between 2 RuvA tetramers; dsDNA enters through RuvA and exits via RuvB. An RuvB hexamer assembles on each DNA strand where it exits the tetramer. Each RuvB hexamer is contacted by two RuvA subunits (via domain III) on 2 adjacent RuvB subunits; this complex drives branch migration. In the full resolvosome a probable DNA-RuvA(4)-RuvB(12)-RuvC(2) complex forms which resolves the HJ.</text>
</comment>
<comment type="subcellular location">
    <subcellularLocation>
        <location evidence="1">Cytoplasm</location>
    </subcellularLocation>
</comment>
<comment type="domain">
    <text evidence="1">Has 3 domains, the large (RuvB-L) and small ATPase (RuvB-S) domains and the C-terminal head (RuvB-H) domain. The head domain binds DNA, while the ATPase domains jointly bind ATP, ADP or are empty depending on the state of the subunit in the translocation cycle. During a single DNA translocation step the structure of each domain remains the same, but their relative positions change.</text>
</comment>
<comment type="similarity">
    <text evidence="1">Belongs to the RuvB family.</text>
</comment>
<protein>
    <recommendedName>
        <fullName evidence="1">Holliday junction branch migration complex subunit RuvB</fullName>
        <ecNumber evidence="1">3.6.4.-</ecNumber>
    </recommendedName>
</protein>
<organism>
    <name type="scientific">Vibrio vulnificus (strain YJ016)</name>
    <dbReference type="NCBI Taxonomy" id="196600"/>
    <lineage>
        <taxon>Bacteria</taxon>
        <taxon>Pseudomonadati</taxon>
        <taxon>Pseudomonadota</taxon>
        <taxon>Gammaproteobacteria</taxon>
        <taxon>Vibrionales</taxon>
        <taxon>Vibrionaceae</taxon>
        <taxon>Vibrio</taxon>
    </lineage>
</organism>
<sequence>MIEADRLIAPENPAFRDEDVIDRAIRPKKLADYQGQDHVRDQMEIFIKAAQLRNEALDHLLIFGPPGLGKTTLANIVANEMGVNIRTTSGPVLEKAGDLAALLTNLEENDVLFIDEIHRLSPMVEEVLYPAMEDYQLDIMIGEGPAARSIKIDLPPFTLIGATTRAGSLTSPLRDRFGITQRLEYYKIPDLQNIVQRSADCLGLSMEAEGALEVARRARGTPRIANRLLRRVRDFAEVKGNGHICADTADKALNMLDVDSKGFDYMDRKLLLAIMEKFGGGPVGLDNMAAAIGEEKDTIEDVLEPYLIQQGYLQRTPRGRIATDRAYLHFGIEK</sequence>
<gene>
    <name evidence="1" type="primary">ruvB</name>
    <name type="ordered locus">VV2284</name>
</gene>